<sequence length="148" mass="17410">MIDKKELREISLKKKREKRLTWEEIGKYLGRDKVYAAMLLYGYAQATEEEADKIITLLDLPKELKPAFLDAPMRTPAQPWPPTDPFIYRLYEGVLLYGPVIKDVAHELFGDGIMSMIDVKIYVDKVIENNYPRMVLTFNGKWLYYSKW</sequence>
<comment type="function">
    <text evidence="1">Catalyzes the reaction of cyanate with bicarbonate to produce ammonia and carbon dioxide.</text>
</comment>
<comment type="catalytic activity">
    <reaction evidence="1">
        <text>cyanate + hydrogencarbonate + 3 H(+) = NH4(+) + 2 CO2</text>
        <dbReference type="Rhea" id="RHEA:11120"/>
        <dbReference type="ChEBI" id="CHEBI:15378"/>
        <dbReference type="ChEBI" id="CHEBI:16526"/>
        <dbReference type="ChEBI" id="CHEBI:17544"/>
        <dbReference type="ChEBI" id="CHEBI:28938"/>
        <dbReference type="ChEBI" id="CHEBI:29195"/>
        <dbReference type="EC" id="4.2.1.104"/>
    </reaction>
</comment>
<comment type="similarity">
    <text evidence="1">Belongs to the cyanase family.</text>
</comment>
<dbReference type="EC" id="4.2.1.104" evidence="1"/>
<dbReference type="EMBL" id="BA000023">
    <property type="protein sequence ID" value="BAB66048.1"/>
    <property type="molecule type" value="Genomic_DNA"/>
</dbReference>
<dbReference type="RefSeq" id="WP_010979030.1">
    <property type="nucleotide sequence ID" value="NC_003106.2"/>
</dbReference>
<dbReference type="SMR" id="Q972W5"/>
<dbReference type="STRING" id="273063.STK_10230"/>
<dbReference type="GeneID" id="1459002"/>
<dbReference type="KEGG" id="sto:STK_10230"/>
<dbReference type="PATRIC" id="fig|273063.9.peg.1151"/>
<dbReference type="OrthoDB" id="42587at2157"/>
<dbReference type="Proteomes" id="UP000001015">
    <property type="component" value="Chromosome"/>
</dbReference>
<dbReference type="GO" id="GO:0008824">
    <property type="term" value="F:cyanate hydratase activity"/>
    <property type="evidence" value="ECO:0007669"/>
    <property type="project" value="UniProtKB-UniRule"/>
</dbReference>
<dbReference type="GO" id="GO:0003677">
    <property type="term" value="F:DNA binding"/>
    <property type="evidence" value="ECO:0007669"/>
    <property type="project" value="InterPro"/>
</dbReference>
<dbReference type="GO" id="GO:0009439">
    <property type="term" value="P:cyanate metabolic process"/>
    <property type="evidence" value="ECO:0007669"/>
    <property type="project" value="UniProtKB-UniRule"/>
</dbReference>
<dbReference type="CDD" id="cd00559">
    <property type="entry name" value="Cyanase_C"/>
    <property type="match status" value="1"/>
</dbReference>
<dbReference type="Gene3D" id="3.30.1160.10">
    <property type="entry name" value="Cyanate lyase, C-terminal domain"/>
    <property type="match status" value="1"/>
</dbReference>
<dbReference type="Gene3D" id="1.10.260.40">
    <property type="entry name" value="lambda repressor-like DNA-binding domains"/>
    <property type="match status" value="1"/>
</dbReference>
<dbReference type="HAMAP" id="MF_00535">
    <property type="entry name" value="Cyanate_hydrat"/>
    <property type="match status" value="1"/>
</dbReference>
<dbReference type="InterPro" id="IPR008076">
    <property type="entry name" value="Cyanase"/>
</dbReference>
<dbReference type="InterPro" id="IPR003712">
    <property type="entry name" value="Cyanate_lyase_C"/>
</dbReference>
<dbReference type="InterPro" id="IPR036581">
    <property type="entry name" value="Cyanate_lyase_C_sf"/>
</dbReference>
<dbReference type="InterPro" id="IPR010982">
    <property type="entry name" value="Lambda_DNA-bd_dom_sf"/>
</dbReference>
<dbReference type="NCBIfam" id="TIGR00673">
    <property type="entry name" value="cynS"/>
    <property type="match status" value="1"/>
</dbReference>
<dbReference type="NCBIfam" id="NF002773">
    <property type="entry name" value="PRK02866.1"/>
    <property type="match status" value="1"/>
</dbReference>
<dbReference type="PANTHER" id="PTHR34186">
    <property type="entry name" value="CYANATE HYDRATASE"/>
    <property type="match status" value="1"/>
</dbReference>
<dbReference type="PANTHER" id="PTHR34186:SF2">
    <property type="entry name" value="CYANATE HYDRATASE"/>
    <property type="match status" value="1"/>
</dbReference>
<dbReference type="Pfam" id="PF02560">
    <property type="entry name" value="Cyanate_lyase"/>
    <property type="match status" value="1"/>
</dbReference>
<dbReference type="PIRSF" id="PIRSF001263">
    <property type="entry name" value="Cyanate_hydratas"/>
    <property type="match status" value="1"/>
</dbReference>
<dbReference type="PRINTS" id="PR01693">
    <property type="entry name" value="CYANASE"/>
</dbReference>
<dbReference type="SMART" id="SM01116">
    <property type="entry name" value="Cyanate_lyase"/>
    <property type="match status" value="1"/>
</dbReference>
<dbReference type="SUPFAM" id="SSF55234">
    <property type="entry name" value="Cyanase C-terminal domain"/>
    <property type="match status" value="1"/>
</dbReference>
<dbReference type="SUPFAM" id="SSF47413">
    <property type="entry name" value="lambda repressor-like DNA-binding domains"/>
    <property type="match status" value="1"/>
</dbReference>
<accession>Q972W5</accession>
<organism>
    <name type="scientific">Sulfurisphaera tokodaii (strain DSM 16993 / JCM 10545 / NBRC 100140 / 7)</name>
    <name type="common">Sulfolobus tokodaii</name>
    <dbReference type="NCBI Taxonomy" id="273063"/>
    <lineage>
        <taxon>Archaea</taxon>
        <taxon>Thermoproteota</taxon>
        <taxon>Thermoprotei</taxon>
        <taxon>Sulfolobales</taxon>
        <taxon>Sulfolobaceae</taxon>
        <taxon>Sulfurisphaera</taxon>
    </lineage>
</organism>
<feature type="chain" id="PRO_0000187533" description="Cyanate hydratase">
    <location>
        <begin position="1"/>
        <end position="148"/>
    </location>
</feature>
<feature type="active site" evidence="1">
    <location>
        <position position="89"/>
    </location>
</feature>
<feature type="active site" evidence="1">
    <location>
        <position position="92"/>
    </location>
</feature>
<feature type="active site" evidence="1">
    <location>
        <position position="115"/>
    </location>
</feature>
<reference key="1">
    <citation type="journal article" date="2001" name="DNA Res.">
        <title>Complete genome sequence of an aerobic thermoacidophilic Crenarchaeon, Sulfolobus tokodaii strain7.</title>
        <authorList>
            <person name="Kawarabayasi Y."/>
            <person name="Hino Y."/>
            <person name="Horikawa H."/>
            <person name="Jin-no K."/>
            <person name="Takahashi M."/>
            <person name="Sekine M."/>
            <person name="Baba S."/>
            <person name="Ankai A."/>
            <person name="Kosugi H."/>
            <person name="Hosoyama A."/>
            <person name="Fukui S."/>
            <person name="Nagai Y."/>
            <person name="Nishijima K."/>
            <person name="Otsuka R."/>
            <person name="Nakazawa H."/>
            <person name="Takamiya M."/>
            <person name="Kato Y."/>
            <person name="Yoshizawa T."/>
            <person name="Tanaka T."/>
            <person name="Kudoh Y."/>
            <person name="Yamazaki J."/>
            <person name="Kushida N."/>
            <person name="Oguchi A."/>
            <person name="Aoki K."/>
            <person name="Masuda S."/>
            <person name="Yanagii M."/>
            <person name="Nishimura M."/>
            <person name="Yamagishi A."/>
            <person name="Oshima T."/>
            <person name="Kikuchi H."/>
        </authorList>
    </citation>
    <scope>NUCLEOTIDE SEQUENCE [LARGE SCALE GENOMIC DNA]</scope>
    <source>
        <strain>DSM 16993 / JCM 10545 / NBRC 100140 / 7</strain>
    </source>
</reference>
<evidence type="ECO:0000255" key="1">
    <source>
        <dbReference type="HAMAP-Rule" id="MF_00535"/>
    </source>
</evidence>
<keyword id="KW-0456">Lyase</keyword>
<keyword id="KW-1185">Reference proteome</keyword>
<gene>
    <name evidence="1" type="primary">cynS</name>
    <name type="ordered locus">STK_10230</name>
</gene>
<name>CYNS_SULTO</name>
<protein>
    <recommendedName>
        <fullName evidence="1">Cyanate hydratase</fullName>
        <shortName evidence="1">Cyanase</shortName>
        <ecNumber evidence="1">4.2.1.104</ecNumber>
    </recommendedName>
    <alternativeName>
        <fullName evidence="1">Cyanate hydrolase</fullName>
    </alternativeName>
    <alternativeName>
        <fullName evidence="1">Cyanate lyase</fullName>
    </alternativeName>
</protein>
<proteinExistence type="inferred from homology"/>